<feature type="chain" id="PRO_0000422673" description="Zinc metalloprotease Rip1">
    <location>
        <begin position="1"/>
        <end position="404"/>
    </location>
</feature>
<feature type="transmembrane region" description="Helical" evidence="2">
    <location>
        <begin position="1"/>
        <end position="21"/>
    </location>
</feature>
<feature type="transmembrane region" description="Helical" evidence="2">
    <location>
        <begin position="104"/>
        <end position="124"/>
    </location>
</feature>
<feature type="transmembrane region" description="Helical" evidence="2">
    <location>
        <begin position="313"/>
        <end position="333"/>
    </location>
</feature>
<feature type="transmembrane region" description="Helical" evidence="2">
    <location>
        <begin position="373"/>
        <end position="393"/>
    </location>
</feature>
<feature type="domain" description="PDZ" evidence="3">
    <location>
        <begin position="121"/>
        <end position="203"/>
    </location>
</feature>
<feature type="active site" evidence="2">
    <location>
        <position position="22"/>
    </location>
</feature>
<feature type="binding site" evidence="1">
    <location>
        <position position="21"/>
    </location>
    <ligand>
        <name>Zn(2+)</name>
        <dbReference type="ChEBI" id="CHEBI:29105"/>
        <note>catalytic</note>
    </ligand>
</feature>
<feature type="binding site" evidence="1">
    <location>
        <position position="25"/>
    </location>
    <ligand>
        <name>Zn(2+)</name>
        <dbReference type="ChEBI" id="CHEBI:29105"/>
        <note>catalytic</note>
    </ligand>
</feature>
<feature type="binding site" evidence="1">
    <location>
        <position position="202"/>
    </location>
    <ligand>
        <name>Zn(2+)</name>
        <dbReference type="ChEBI" id="CHEBI:29105"/>
        <note>catalytic</note>
    </ligand>
</feature>
<feature type="mutagenesis site" description="Does not restore cording to deletion mutants." evidence="4">
    <original>H</original>
    <variation>A</variation>
    <location>
        <position position="21"/>
    </location>
</feature>
<feature type="mutagenesis site" description="Does not restore cording to deletion mutants." evidence="4">
    <original>D</original>
    <variation>A</variation>
    <location>
        <position position="340"/>
    </location>
</feature>
<name>RIP1_MYCBP</name>
<comment type="function">
    <text evidence="1">A probable intramembrane site-2 protease (S2P) that cleaves type-2 transmembrane proteins within their membrane-spanning domains. Cleaves PbpB (PBP3, FtsI); cleavage is inhibited by Wag31-PbpB interaction. Probably also cleaves anti-sigma factors RskA, RslA and RsmA.</text>
</comment>
<comment type="function">
    <text evidence="5">Regulated intramembrane proteolysis (RIP) occurs when an extracytoplasmic signal (possibly oxidative stress) triggers a concerted proteolytic cascade to transmit information and elicit cellular responses. The membrane-spanning regulatory substrate protein (includes anti-sigma factors RskA, RslA, RsmA, and PbpB in M.tuberculosis) is first cut extracytoplasmically (site-1 protease, S1P), then within the membrane itself (site-2 protease, S2P, this entry), while cytoplasmic proteases finish degrading the regulatory protein, liberating the effector protein (ECF sigma factors SigK, SigL and SigM) (Probable).</text>
</comment>
<comment type="cofactor">
    <cofactor evidence="1">
        <name>Zn(2+)</name>
        <dbReference type="ChEBI" id="CHEBI:29105"/>
    </cofactor>
</comment>
<comment type="subcellular location">
    <subcellularLocation>
        <location evidence="5">Cell membrane</location>
        <topology evidence="5">Multi-pass membrane protein</topology>
    </subcellularLocation>
</comment>
<comment type="disruption phenotype">
    <text evidence="4">Not essential. Cells have altered colony morphology, lacking cording associated with virulence.</text>
</comment>
<comment type="similarity">
    <text evidence="5">Belongs to the peptidase M50B family.</text>
</comment>
<evidence type="ECO:0000250" key="1"/>
<evidence type="ECO:0000255" key="2"/>
<evidence type="ECO:0000255" key="3">
    <source>
        <dbReference type="PROSITE-ProRule" id="PRU00143"/>
    </source>
</evidence>
<evidence type="ECO:0000269" key="4">
    <source>
    </source>
</evidence>
<evidence type="ECO:0000305" key="5"/>
<sequence>MMFVTGIVLFALAILISVALHECGHMWVARRTGMKVRRYFVGFGPTLWSTRRGETEYGVKAVPLGGFCDIAGMTPVEELDPDERDRAMYKQATWKRVAVLFAGPGMNLAICLVLIYAIALVWGLPNLHPPTRAVIGETGCVAQEVSQGKLEQCTGPGPAALAGIRSGDVVVKVGDTPVSSFDEMAAAVRKSHGSVPIVVERDGTAIVTYVDIESTQRWIPNGQGGELQPATVGAIGVGAARVGPVRYGVFSAMPATFAFTGDLTVEVGKALAALPTKVGALVRAIGGGQRDPQTPISVVGASIIGGDTVDHGLWVAFWFFLAQLNLILATINLLPLLPFDGGHIAVAVFERIRNMVRSARGKVAAAPVNYLKLLPATYVVLVLVVGYMLLTVTADLVNPIRLFQ</sequence>
<dbReference type="EC" id="3.4.24.-"/>
<dbReference type="EMBL" id="AM408590">
    <property type="protein sequence ID" value="CAL72880.1"/>
    <property type="molecule type" value="Genomic_DNA"/>
</dbReference>
<dbReference type="RefSeq" id="WP_011799297.1">
    <property type="nucleotide sequence ID" value="NC_008769.1"/>
</dbReference>
<dbReference type="SMR" id="A1KML4"/>
<dbReference type="MEROPS" id="M50.005"/>
<dbReference type="KEGG" id="mbb:BCG_2891c"/>
<dbReference type="HOGENOM" id="CLU_025778_1_2_11"/>
<dbReference type="Proteomes" id="UP000001472">
    <property type="component" value="Chromosome"/>
</dbReference>
<dbReference type="GO" id="GO:0005886">
    <property type="term" value="C:plasma membrane"/>
    <property type="evidence" value="ECO:0007669"/>
    <property type="project" value="UniProtKB-SubCell"/>
</dbReference>
<dbReference type="GO" id="GO:0046872">
    <property type="term" value="F:metal ion binding"/>
    <property type="evidence" value="ECO:0007669"/>
    <property type="project" value="UniProtKB-KW"/>
</dbReference>
<dbReference type="GO" id="GO:0004222">
    <property type="term" value="F:metalloendopeptidase activity"/>
    <property type="evidence" value="ECO:0007669"/>
    <property type="project" value="InterPro"/>
</dbReference>
<dbReference type="GO" id="GO:0006508">
    <property type="term" value="P:proteolysis"/>
    <property type="evidence" value="ECO:0007669"/>
    <property type="project" value="UniProtKB-KW"/>
</dbReference>
<dbReference type="CDD" id="cd06163">
    <property type="entry name" value="S2P-M50_PDZ_RseP-like"/>
    <property type="match status" value="1"/>
</dbReference>
<dbReference type="Gene3D" id="2.30.42.10">
    <property type="match status" value="1"/>
</dbReference>
<dbReference type="InterPro" id="IPR001478">
    <property type="entry name" value="PDZ"/>
</dbReference>
<dbReference type="InterPro" id="IPR041489">
    <property type="entry name" value="PDZ_6"/>
</dbReference>
<dbReference type="InterPro" id="IPR036034">
    <property type="entry name" value="PDZ_sf"/>
</dbReference>
<dbReference type="InterPro" id="IPR004387">
    <property type="entry name" value="Pept_M50_Zn"/>
</dbReference>
<dbReference type="InterPro" id="IPR008915">
    <property type="entry name" value="Peptidase_M50"/>
</dbReference>
<dbReference type="PANTHER" id="PTHR42837:SF2">
    <property type="entry name" value="MEMBRANE METALLOPROTEASE ARASP2, CHLOROPLASTIC-RELATED"/>
    <property type="match status" value="1"/>
</dbReference>
<dbReference type="PANTHER" id="PTHR42837">
    <property type="entry name" value="REGULATOR OF SIGMA-E PROTEASE RSEP"/>
    <property type="match status" value="1"/>
</dbReference>
<dbReference type="Pfam" id="PF17820">
    <property type="entry name" value="PDZ_6"/>
    <property type="match status" value="1"/>
</dbReference>
<dbReference type="Pfam" id="PF02163">
    <property type="entry name" value="Peptidase_M50"/>
    <property type="match status" value="1"/>
</dbReference>
<dbReference type="SMART" id="SM00228">
    <property type="entry name" value="PDZ"/>
    <property type="match status" value="1"/>
</dbReference>
<dbReference type="SUPFAM" id="SSF50156">
    <property type="entry name" value="PDZ domain-like"/>
    <property type="match status" value="1"/>
</dbReference>
<dbReference type="PROSITE" id="PS50106">
    <property type="entry name" value="PDZ"/>
    <property type="match status" value="1"/>
</dbReference>
<organism>
    <name type="scientific">Mycobacterium bovis (strain BCG / Pasteur 1173P2)</name>
    <dbReference type="NCBI Taxonomy" id="410289"/>
    <lineage>
        <taxon>Bacteria</taxon>
        <taxon>Bacillati</taxon>
        <taxon>Actinomycetota</taxon>
        <taxon>Actinomycetes</taxon>
        <taxon>Mycobacteriales</taxon>
        <taxon>Mycobacteriaceae</taxon>
        <taxon>Mycobacterium</taxon>
        <taxon>Mycobacterium tuberculosis complex</taxon>
    </lineage>
</organism>
<protein>
    <recommendedName>
        <fullName>Zinc metalloprotease Rip1</fullName>
        <ecNumber>3.4.24.-</ecNumber>
    </recommendedName>
    <alternativeName>
        <fullName>Regulator of sigma KLM proteases</fullName>
    </alternativeName>
    <alternativeName>
        <fullName>S2P endopeptidase</fullName>
    </alternativeName>
    <alternativeName>
        <fullName>Site-2-type intramembrane protease</fullName>
    </alternativeName>
    <alternativeName>
        <fullName>site-2 protease Rip1</fullName>
        <shortName>S2P protease Rip1</shortName>
    </alternativeName>
</protein>
<keyword id="KW-1003">Cell membrane</keyword>
<keyword id="KW-0378">Hydrolase</keyword>
<keyword id="KW-0472">Membrane</keyword>
<keyword id="KW-0479">Metal-binding</keyword>
<keyword id="KW-0482">Metalloprotease</keyword>
<keyword id="KW-0645">Protease</keyword>
<keyword id="KW-0812">Transmembrane</keyword>
<keyword id="KW-1133">Transmembrane helix</keyword>
<keyword id="KW-0862">Zinc</keyword>
<accession>A1KML4</accession>
<gene>
    <name type="primary">rip1</name>
    <name type="ordered locus">BCG_2891c</name>
</gene>
<proteinExistence type="evidence at protein level"/>
<reference key="1">
    <citation type="journal article" date="2007" name="Proc. Natl. Acad. Sci. U.S.A.">
        <title>Genome plasticity of BCG and impact on vaccine efficacy.</title>
        <authorList>
            <person name="Brosch R."/>
            <person name="Gordon S.V."/>
            <person name="Garnier T."/>
            <person name="Eiglmeier K."/>
            <person name="Frigui W."/>
            <person name="Valenti P."/>
            <person name="Dos Santos S."/>
            <person name="Duthoy S."/>
            <person name="Lacroix C."/>
            <person name="Garcia-Pelayo C."/>
            <person name="Inwald J.K."/>
            <person name="Golby P."/>
            <person name="Garcia J.N."/>
            <person name="Hewinson R.G."/>
            <person name="Behr M.A."/>
            <person name="Quail M.A."/>
            <person name="Churcher C."/>
            <person name="Barrell B.G."/>
            <person name="Parkhill J."/>
            <person name="Cole S.T."/>
        </authorList>
    </citation>
    <scope>NUCLEOTIDE SEQUENCE [LARGE SCALE GENOMIC DNA]</scope>
    <source>
        <strain>BCG / Pasteur 1173P2</strain>
    </source>
</reference>
<reference key="2">
    <citation type="journal article" date="2005" name="Nature">
        <title>Regulation of Mycobacterium tuberculosis cell envelope composition and virulence by intramembrane proteolysis.</title>
        <authorList>
            <person name="Makinoshima H."/>
            <person name="Glickman M.S."/>
        </authorList>
    </citation>
    <scope>DISRUPTION PHENOTYPE</scope>
    <scope>MUTAGENESIS OF HIS-21 AND ASP-340</scope>
    <source>
        <strain>BCG / Pasteur 1173P2</strain>
    </source>
</reference>